<proteinExistence type="inferred from homology"/>
<dbReference type="EC" id="4.2.1.19" evidence="1"/>
<dbReference type="EMBL" id="CP000381">
    <property type="protein sequence ID" value="ABX73651.1"/>
    <property type="molecule type" value="Genomic_DNA"/>
</dbReference>
<dbReference type="SMR" id="A9M186"/>
<dbReference type="KEGG" id="nmn:NMCC_1487"/>
<dbReference type="HOGENOM" id="CLU_044308_1_1_4"/>
<dbReference type="UniPathway" id="UPA00031">
    <property type="reaction ID" value="UER00011"/>
</dbReference>
<dbReference type="Proteomes" id="UP000001177">
    <property type="component" value="Chromosome"/>
</dbReference>
<dbReference type="GO" id="GO:0005737">
    <property type="term" value="C:cytoplasm"/>
    <property type="evidence" value="ECO:0007669"/>
    <property type="project" value="UniProtKB-SubCell"/>
</dbReference>
<dbReference type="GO" id="GO:0004424">
    <property type="term" value="F:imidazoleglycerol-phosphate dehydratase activity"/>
    <property type="evidence" value="ECO:0007669"/>
    <property type="project" value="UniProtKB-UniRule"/>
</dbReference>
<dbReference type="GO" id="GO:0000105">
    <property type="term" value="P:L-histidine biosynthetic process"/>
    <property type="evidence" value="ECO:0007669"/>
    <property type="project" value="UniProtKB-UniRule"/>
</dbReference>
<dbReference type="CDD" id="cd07914">
    <property type="entry name" value="IGPD"/>
    <property type="match status" value="1"/>
</dbReference>
<dbReference type="FunFam" id="3.30.230.40:FF:000002">
    <property type="entry name" value="Imidazoleglycerol-phosphate dehydratase"/>
    <property type="match status" value="1"/>
</dbReference>
<dbReference type="FunFam" id="3.30.230.40:FF:000003">
    <property type="entry name" value="Imidazoleglycerol-phosphate dehydratase HisB"/>
    <property type="match status" value="1"/>
</dbReference>
<dbReference type="Gene3D" id="3.30.230.40">
    <property type="entry name" value="Imidazole glycerol phosphate dehydratase, domain 1"/>
    <property type="match status" value="2"/>
</dbReference>
<dbReference type="HAMAP" id="MF_00076">
    <property type="entry name" value="HisB"/>
    <property type="match status" value="1"/>
</dbReference>
<dbReference type="InterPro" id="IPR038494">
    <property type="entry name" value="IGPD_sf"/>
</dbReference>
<dbReference type="InterPro" id="IPR000807">
    <property type="entry name" value="ImidazoleglycerolP_deHydtase"/>
</dbReference>
<dbReference type="InterPro" id="IPR020565">
    <property type="entry name" value="ImidazoleglycerP_deHydtase_CS"/>
</dbReference>
<dbReference type="InterPro" id="IPR020568">
    <property type="entry name" value="Ribosomal_Su5_D2-typ_SF"/>
</dbReference>
<dbReference type="NCBIfam" id="NF002106">
    <property type="entry name" value="PRK00951.1-1"/>
    <property type="match status" value="1"/>
</dbReference>
<dbReference type="NCBIfam" id="NF002109">
    <property type="entry name" value="PRK00951.1-5"/>
    <property type="match status" value="1"/>
</dbReference>
<dbReference type="NCBIfam" id="NF002111">
    <property type="entry name" value="PRK00951.2-1"/>
    <property type="match status" value="1"/>
</dbReference>
<dbReference type="NCBIfam" id="NF002114">
    <property type="entry name" value="PRK00951.2-4"/>
    <property type="match status" value="1"/>
</dbReference>
<dbReference type="PANTHER" id="PTHR23133:SF2">
    <property type="entry name" value="IMIDAZOLEGLYCEROL-PHOSPHATE DEHYDRATASE"/>
    <property type="match status" value="1"/>
</dbReference>
<dbReference type="PANTHER" id="PTHR23133">
    <property type="entry name" value="IMIDAZOLEGLYCEROL-PHOSPHATE DEHYDRATASE HIS7"/>
    <property type="match status" value="1"/>
</dbReference>
<dbReference type="Pfam" id="PF00475">
    <property type="entry name" value="IGPD"/>
    <property type="match status" value="1"/>
</dbReference>
<dbReference type="SUPFAM" id="SSF54211">
    <property type="entry name" value="Ribosomal protein S5 domain 2-like"/>
    <property type="match status" value="2"/>
</dbReference>
<dbReference type="PROSITE" id="PS00954">
    <property type="entry name" value="IGP_DEHYDRATASE_1"/>
    <property type="match status" value="1"/>
</dbReference>
<dbReference type="PROSITE" id="PS00955">
    <property type="entry name" value="IGP_DEHYDRATASE_2"/>
    <property type="match status" value="1"/>
</dbReference>
<feature type="chain" id="PRO_0000336326" description="Imidazoleglycerol-phosphate dehydratase">
    <location>
        <begin position="1"/>
        <end position="305"/>
    </location>
</feature>
<comment type="catalytic activity">
    <reaction evidence="1">
        <text>D-erythro-1-(imidazol-4-yl)glycerol 3-phosphate = 3-(imidazol-4-yl)-2-oxopropyl phosphate + H2O</text>
        <dbReference type="Rhea" id="RHEA:11040"/>
        <dbReference type="ChEBI" id="CHEBI:15377"/>
        <dbReference type="ChEBI" id="CHEBI:57766"/>
        <dbReference type="ChEBI" id="CHEBI:58278"/>
        <dbReference type="EC" id="4.2.1.19"/>
    </reaction>
</comment>
<comment type="pathway">
    <text evidence="1">Amino-acid biosynthesis; L-histidine biosynthesis; L-histidine from 5-phospho-alpha-D-ribose 1-diphosphate: step 6/9.</text>
</comment>
<comment type="subcellular location">
    <subcellularLocation>
        <location evidence="1">Cytoplasm</location>
    </subcellularLocation>
</comment>
<comment type="similarity">
    <text evidence="1">Belongs to the imidazoleglycerol-phosphate dehydratase family.</text>
</comment>
<keyword id="KW-0028">Amino-acid biosynthesis</keyword>
<keyword id="KW-0963">Cytoplasm</keyword>
<keyword id="KW-0368">Histidine biosynthesis</keyword>
<keyword id="KW-0456">Lyase</keyword>
<name>HIS7_NEIM0</name>
<protein>
    <recommendedName>
        <fullName evidence="1">Imidazoleglycerol-phosphate dehydratase</fullName>
        <shortName evidence="1">IGPD</shortName>
        <ecNumber evidence="1">4.2.1.19</ecNumber>
    </recommendedName>
</protein>
<gene>
    <name evidence="1" type="primary">hisB</name>
    <name type="ordered locus">NMCC_1487</name>
</gene>
<evidence type="ECO:0000255" key="1">
    <source>
        <dbReference type="HAMAP-Rule" id="MF_00076"/>
    </source>
</evidence>
<reference key="1">
    <citation type="journal article" date="2008" name="Genomics">
        <title>Characterization of ST-4821 complex, a unique Neisseria meningitidis clone.</title>
        <authorList>
            <person name="Peng J."/>
            <person name="Yang L."/>
            <person name="Yang F."/>
            <person name="Yang J."/>
            <person name="Yan Y."/>
            <person name="Nie H."/>
            <person name="Zhang X."/>
            <person name="Xiong Z."/>
            <person name="Jiang Y."/>
            <person name="Cheng F."/>
            <person name="Xu X."/>
            <person name="Chen S."/>
            <person name="Sun L."/>
            <person name="Li W."/>
            <person name="Shen Y."/>
            <person name="Shao Z."/>
            <person name="Liang X."/>
            <person name="Xu J."/>
            <person name="Jin Q."/>
        </authorList>
    </citation>
    <scope>NUCLEOTIDE SEQUENCE [LARGE SCALE GENOMIC DNA]</scope>
    <source>
        <strain>053442</strain>
    </source>
</reference>
<organism>
    <name type="scientific">Neisseria meningitidis serogroup C (strain 053442)</name>
    <dbReference type="NCBI Taxonomy" id="374833"/>
    <lineage>
        <taxon>Bacteria</taxon>
        <taxon>Pseudomonadati</taxon>
        <taxon>Pseudomonadota</taxon>
        <taxon>Betaproteobacteria</taxon>
        <taxon>Neisseriales</taxon>
        <taxon>Neisseriaceae</taxon>
        <taxon>Neisseria</taxon>
    </lineage>
</organism>
<sequence length="305" mass="33739">MNLTKTQRQLHNFLTLAQEAGSLSKLAKLCGYRTPVALYKLKQRLEKQAEDPDARGIRPSLMAKLEKHTGKPKGWLDRKHRERTVPETAAESTGTAETQIAETASAAGCRSVTVNRNTCETQITVSINLDGSGKSRLDTGVPFLEHMIDQIARHGMIDIDISCKGDLHIDDHHTAEDIGITLGQAIRQALGDKKGIRRYGHSYVPLDEALSRVVIDLSGRPGLVYNIEFTRALIGRFDVDLFEEFFHGIVNHSMMTLHIDNLSGKNAHHQAETVFKAFGRALRMAVEHDPRMAGQTPSTKGTLTA</sequence>
<accession>A9M186</accession>